<evidence type="ECO:0000255" key="1">
    <source>
        <dbReference type="HAMAP-Rule" id="MF_00274"/>
    </source>
</evidence>
<evidence type="ECO:0000305" key="2"/>
<name>Y1102_STRPN</name>
<proteinExistence type="evidence at protein level"/>
<comment type="function">
    <text evidence="1">Binds to DNA and alters its conformation. May be involved in regulation of gene expression, nucleoid organization and DNA protection.</text>
</comment>
<comment type="subunit">
    <text evidence="1">Homodimer.</text>
</comment>
<comment type="interaction">
    <interactant intactId="EBI-6472841">
        <id>P67266</id>
    </interactant>
    <interactant intactId="EBI-6472833">
        <id>P63957</id>
        <label>dltC</label>
    </interactant>
    <organismsDiffer>false</organismsDiffer>
    <experiments>3</experiments>
</comment>
<comment type="subcellular location">
    <subcellularLocation>
        <location evidence="1">Cytoplasm</location>
        <location evidence="1">Nucleoid</location>
    </subcellularLocation>
</comment>
<comment type="similarity">
    <text evidence="1">Belongs to the YbaB/EbfC family.</text>
</comment>
<comment type="sequence caution" evidence="2">
    <conflict type="erroneous initiation">
        <sequence resource="EMBL-CDS" id="AAK75213"/>
    </conflict>
</comment>
<organism>
    <name type="scientific">Streptococcus pneumoniae serotype 4 (strain ATCC BAA-334 / TIGR4)</name>
    <dbReference type="NCBI Taxonomy" id="170187"/>
    <lineage>
        <taxon>Bacteria</taxon>
        <taxon>Bacillati</taxon>
        <taxon>Bacillota</taxon>
        <taxon>Bacilli</taxon>
        <taxon>Lactobacillales</taxon>
        <taxon>Streptococcaceae</taxon>
        <taxon>Streptococcus</taxon>
    </lineage>
</organism>
<feature type="chain" id="PRO_0000170448" description="Nucleoid-associated protein SP_1102">
    <location>
        <begin position="1"/>
        <end position="99"/>
    </location>
</feature>
<gene>
    <name type="ordered locus">SP_1102</name>
</gene>
<dbReference type="EMBL" id="AE005672">
    <property type="protein sequence ID" value="AAK75213.1"/>
    <property type="status" value="ALT_INIT"/>
    <property type="molecule type" value="Genomic_DNA"/>
</dbReference>
<dbReference type="PIR" id="D95127">
    <property type="entry name" value="D95127"/>
</dbReference>
<dbReference type="RefSeq" id="WP_000981526.1">
    <property type="nucleotide sequence ID" value="NZ_CP155539.1"/>
</dbReference>
<dbReference type="SMR" id="P67266"/>
<dbReference type="IntAct" id="P67266">
    <property type="interactions" value="1"/>
</dbReference>
<dbReference type="PaxDb" id="170187-SP_1102"/>
<dbReference type="EnsemblBacteria" id="AAK75213">
    <property type="protein sequence ID" value="AAK75213"/>
    <property type="gene ID" value="SP_1102"/>
</dbReference>
<dbReference type="KEGG" id="spn:SP_1102"/>
<dbReference type="eggNOG" id="COG0718">
    <property type="taxonomic scope" value="Bacteria"/>
</dbReference>
<dbReference type="PhylomeDB" id="P67266"/>
<dbReference type="BioCyc" id="SPNE170187:G1FZB-1130-MONOMER"/>
<dbReference type="Proteomes" id="UP000000585">
    <property type="component" value="Chromosome"/>
</dbReference>
<dbReference type="GO" id="GO:0043590">
    <property type="term" value="C:bacterial nucleoid"/>
    <property type="evidence" value="ECO:0007669"/>
    <property type="project" value="UniProtKB-UniRule"/>
</dbReference>
<dbReference type="GO" id="GO:0005829">
    <property type="term" value="C:cytosol"/>
    <property type="evidence" value="ECO:0007669"/>
    <property type="project" value="TreeGrafter"/>
</dbReference>
<dbReference type="GO" id="GO:0003677">
    <property type="term" value="F:DNA binding"/>
    <property type="evidence" value="ECO:0007669"/>
    <property type="project" value="UniProtKB-UniRule"/>
</dbReference>
<dbReference type="FunFam" id="3.30.1310.10:FF:000005">
    <property type="entry name" value="Nucleoid-associated protein SPAR113_1167"/>
    <property type="match status" value="1"/>
</dbReference>
<dbReference type="Gene3D" id="3.30.1310.10">
    <property type="entry name" value="Nucleoid-associated protein YbaB-like domain"/>
    <property type="match status" value="1"/>
</dbReference>
<dbReference type="HAMAP" id="MF_00274">
    <property type="entry name" value="DNA_YbaB_EbfC"/>
    <property type="match status" value="1"/>
</dbReference>
<dbReference type="InterPro" id="IPR036894">
    <property type="entry name" value="YbaB-like_sf"/>
</dbReference>
<dbReference type="InterPro" id="IPR004401">
    <property type="entry name" value="YbaB/EbfC"/>
</dbReference>
<dbReference type="NCBIfam" id="TIGR00103">
    <property type="entry name" value="DNA_YbaB_EbfC"/>
    <property type="match status" value="1"/>
</dbReference>
<dbReference type="PANTHER" id="PTHR33449">
    <property type="entry name" value="NUCLEOID-ASSOCIATED PROTEIN YBAB"/>
    <property type="match status" value="1"/>
</dbReference>
<dbReference type="PANTHER" id="PTHR33449:SF1">
    <property type="entry name" value="NUCLEOID-ASSOCIATED PROTEIN YBAB"/>
    <property type="match status" value="1"/>
</dbReference>
<dbReference type="Pfam" id="PF02575">
    <property type="entry name" value="YbaB_DNA_bd"/>
    <property type="match status" value="1"/>
</dbReference>
<dbReference type="PIRSF" id="PIRSF004555">
    <property type="entry name" value="UCP004555"/>
    <property type="match status" value="1"/>
</dbReference>
<dbReference type="SUPFAM" id="SSF82607">
    <property type="entry name" value="YbaB-like"/>
    <property type="match status" value="1"/>
</dbReference>
<accession>P67266</accession>
<accession>Q97QU7</accession>
<sequence>MMNMQNMMRQAQKLQKQMEQSQAELAAMQFVGKSAQDLVQATLTGDKKVVSIDFNPAVVDPEDLETLSDMTVQAINSALEQIDETTKKKLGAFAGKLPF</sequence>
<reference key="1">
    <citation type="journal article" date="2001" name="Science">
        <title>Complete genome sequence of a virulent isolate of Streptococcus pneumoniae.</title>
        <authorList>
            <person name="Tettelin H."/>
            <person name="Nelson K.E."/>
            <person name="Paulsen I.T."/>
            <person name="Eisen J.A."/>
            <person name="Read T.D."/>
            <person name="Peterson S.N."/>
            <person name="Heidelberg J.F."/>
            <person name="DeBoy R.T."/>
            <person name="Haft D.H."/>
            <person name="Dodson R.J."/>
            <person name="Durkin A.S."/>
            <person name="Gwinn M.L."/>
            <person name="Kolonay J.F."/>
            <person name="Nelson W.C."/>
            <person name="Peterson J.D."/>
            <person name="Umayam L.A."/>
            <person name="White O."/>
            <person name="Salzberg S.L."/>
            <person name="Lewis M.R."/>
            <person name="Radune D."/>
            <person name="Holtzapple E.K."/>
            <person name="Khouri H.M."/>
            <person name="Wolf A.M."/>
            <person name="Utterback T.R."/>
            <person name="Hansen C.L."/>
            <person name="McDonald L.A."/>
            <person name="Feldblyum T.V."/>
            <person name="Angiuoli S.V."/>
            <person name="Dickinson T."/>
            <person name="Hickey E.K."/>
            <person name="Holt I.E."/>
            <person name="Loftus B.J."/>
            <person name="Yang F."/>
            <person name="Smith H.O."/>
            <person name="Venter J.C."/>
            <person name="Dougherty B.A."/>
            <person name="Morrison D.A."/>
            <person name="Hollingshead S.K."/>
            <person name="Fraser C.M."/>
        </authorList>
    </citation>
    <scope>NUCLEOTIDE SEQUENCE [LARGE SCALE GENOMIC DNA]</scope>
    <source>
        <strain>ATCC BAA-334 / TIGR4</strain>
    </source>
</reference>
<protein>
    <recommendedName>
        <fullName evidence="1">Nucleoid-associated protein SP_1102</fullName>
    </recommendedName>
</protein>
<keyword id="KW-0963">Cytoplasm</keyword>
<keyword id="KW-0238">DNA-binding</keyword>
<keyword id="KW-1185">Reference proteome</keyword>